<protein>
    <recommendedName>
        <fullName>Protein ZRG17</fullName>
    </recommendedName>
    <alternativeName>
        <fullName>Zinc-regulated gene 17 protein</fullName>
    </alternativeName>
</protein>
<reference key="1">
    <citation type="journal article" date="1997" name="Nature">
        <title>The nucleotide sequence of Saccharomyces cerevisiae chromosome XIV and its evolutionary implications.</title>
        <authorList>
            <person name="Philippsen P."/>
            <person name="Kleine K."/>
            <person name="Poehlmann R."/>
            <person name="Duesterhoeft A."/>
            <person name="Hamberg K."/>
            <person name="Hegemann J.H."/>
            <person name="Obermaier B."/>
            <person name="Urrestarazu L.A."/>
            <person name="Aert R."/>
            <person name="Albermann K."/>
            <person name="Altmann R."/>
            <person name="Andre B."/>
            <person name="Baladron V."/>
            <person name="Ballesta J.P.G."/>
            <person name="Becam A.-M."/>
            <person name="Beinhauer J.D."/>
            <person name="Boskovic J."/>
            <person name="Buitrago M.J."/>
            <person name="Bussereau F."/>
            <person name="Coster F."/>
            <person name="Crouzet M."/>
            <person name="D'Angelo M."/>
            <person name="Dal Pero F."/>
            <person name="De Antoni A."/>
            <person name="del Rey F."/>
            <person name="Doignon F."/>
            <person name="Domdey H."/>
            <person name="Dubois E."/>
            <person name="Fiedler T.A."/>
            <person name="Fleig U."/>
            <person name="Floeth M."/>
            <person name="Fritz C."/>
            <person name="Gaillardin C."/>
            <person name="Garcia-Cantalejo J.M."/>
            <person name="Glansdorff N."/>
            <person name="Goffeau A."/>
            <person name="Gueldener U."/>
            <person name="Herbert C.J."/>
            <person name="Heumann K."/>
            <person name="Heuss-Neitzel D."/>
            <person name="Hilbert H."/>
            <person name="Hinni K."/>
            <person name="Iraqui Houssaini I."/>
            <person name="Jacquet M."/>
            <person name="Jimenez A."/>
            <person name="Jonniaux J.-L."/>
            <person name="Karpfinger-Hartl L."/>
            <person name="Lanfranchi G."/>
            <person name="Lepingle A."/>
            <person name="Levesque H."/>
            <person name="Lyck R."/>
            <person name="Maftahi M."/>
            <person name="Mallet L."/>
            <person name="Maurer C.T.C."/>
            <person name="Messenguy F."/>
            <person name="Mewes H.-W."/>
            <person name="Moestl D."/>
            <person name="Nasr F."/>
            <person name="Nicaud J.-M."/>
            <person name="Niedenthal R.K."/>
            <person name="Pandolfo D."/>
            <person name="Pierard A."/>
            <person name="Piravandi E."/>
            <person name="Planta R.J."/>
            <person name="Pohl T.M."/>
            <person name="Purnelle B."/>
            <person name="Rebischung C."/>
            <person name="Remacha M.A."/>
            <person name="Revuelta J.L."/>
            <person name="Rinke M."/>
            <person name="Saiz J.E."/>
            <person name="Sartorello F."/>
            <person name="Scherens B."/>
            <person name="Sen-Gupta M."/>
            <person name="Soler-Mira A."/>
            <person name="Urbanus J.H.M."/>
            <person name="Valle G."/>
            <person name="Van Dyck L."/>
            <person name="Verhasselt P."/>
            <person name="Vierendeels F."/>
            <person name="Vissers S."/>
            <person name="Voet M."/>
            <person name="Volckaert G."/>
            <person name="Wach A."/>
            <person name="Wambutt R."/>
            <person name="Wedler H."/>
            <person name="Zollner A."/>
            <person name="Hani J."/>
        </authorList>
    </citation>
    <scope>NUCLEOTIDE SEQUENCE [LARGE SCALE GENOMIC DNA]</scope>
    <source>
        <strain>ATCC 204508 / S288c</strain>
    </source>
</reference>
<reference key="2">
    <citation type="journal article" date="2014" name="G3 (Bethesda)">
        <title>The reference genome sequence of Saccharomyces cerevisiae: Then and now.</title>
        <authorList>
            <person name="Engel S.R."/>
            <person name="Dietrich F.S."/>
            <person name="Fisk D.G."/>
            <person name="Binkley G."/>
            <person name="Balakrishnan R."/>
            <person name="Costanzo M.C."/>
            <person name="Dwight S.S."/>
            <person name="Hitz B.C."/>
            <person name="Karra K."/>
            <person name="Nash R.S."/>
            <person name="Weng S."/>
            <person name="Wong E.D."/>
            <person name="Lloyd P."/>
            <person name="Skrzypek M.S."/>
            <person name="Miyasato S.R."/>
            <person name="Simison M."/>
            <person name="Cherry J.M."/>
        </authorList>
    </citation>
    <scope>GENOME REANNOTATION</scope>
    <source>
        <strain>ATCC 204508 / S288c</strain>
    </source>
</reference>
<reference key="3">
    <citation type="journal article" date="2007" name="Genome Res.">
        <title>Approaching a complete repository of sequence-verified protein-encoding clones for Saccharomyces cerevisiae.</title>
        <authorList>
            <person name="Hu Y."/>
            <person name="Rolfs A."/>
            <person name="Bhullar B."/>
            <person name="Murthy T.V.S."/>
            <person name="Zhu C."/>
            <person name="Berger M.F."/>
            <person name="Camargo A.A."/>
            <person name="Kelley F."/>
            <person name="McCarron S."/>
            <person name="Jepson D."/>
            <person name="Richardson A."/>
            <person name="Raphael J."/>
            <person name="Moreira D."/>
            <person name="Taycher E."/>
            <person name="Zuo D."/>
            <person name="Mohr S."/>
            <person name="Kane M.F."/>
            <person name="Williamson J."/>
            <person name="Simpson A.J.G."/>
            <person name="Bulyk M.L."/>
            <person name="Harlow E."/>
            <person name="Marsischky G."/>
            <person name="Kolodner R.D."/>
            <person name="LaBaer J."/>
        </authorList>
    </citation>
    <scope>NUCLEOTIDE SEQUENCE [GENOMIC DNA]</scope>
    <source>
        <strain>ATCC 204508 / S288c</strain>
    </source>
</reference>
<reference key="4">
    <citation type="journal article" date="2003" name="Nature">
        <title>Global analysis of protein localization in budding yeast.</title>
        <authorList>
            <person name="Huh W.-K."/>
            <person name="Falvo J.V."/>
            <person name="Gerke L.C."/>
            <person name="Carroll A.S."/>
            <person name="Howson R.W."/>
            <person name="Weissman J.S."/>
            <person name="O'Shea E.K."/>
        </authorList>
    </citation>
    <scope>SUBCELLULAR LOCATION [LARGE SCALE ANALYSIS]</scope>
</reference>
<reference key="5">
    <citation type="journal article" date="2006" name="Proc. Natl. Acad. Sci. U.S.A.">
        <title>A global topology map of the Saccharomyces cerevisiae membrane proteome.</title>
        <authorList>
            <person name="Kim H."/>
            <person name="Melen K."/>
            <person name="Oesterberg M."/>
            <person name="von Heijne G."/>
        </authorList>
    </citation>
    <scope>TOPOLOGY [LARGE SCALE ANALYSIS]</scope>
    <source>
        <strain>ATCC 208353 / W303-1A</strain>
    </source>
</reference>
<reference key="6">
    <citation type="journal article" date="2007" name="J. Proteome Res.">
        <title>Large-scale phosphorylation analysis of alpha-factor-arrested Saccharomyces cerevisiae.</title>
        <authorList>
            <person name="Li X."/>
            <person name="Gerber S.A."/>
            <person name="Rudner A.D."/>
            <person name="Beausoleil S.A."/>
            <person name="Haas W."/>
            <person name="Villen J."/>
            <person name="Elias J.E."/>
            <person name="Gygi S.P."/>
        </authorList>
    </citation>
    <scope>PHOSPHORYLATION [LARGE SCALE ANALYSIS] AT SER-498</scope>
    <scope>IDENTIFICATION BY MASS SPECTROMETRY [LARGE SCALE ANALYSIS]</scope>
    <source>
        <strain>ADR376</strain>
    </source>
</reference>
<reference key="7">
    <citation type="journal article" date="2007" name="Proc. Natl. Acad. Sci. U.S.A.">
        <title>Analysis of phosphorylation sites on proteins from Saccharomyces cerevisiae by electron transfer dissociation (ETD) mass spectrometry.</title>
        <authorList>
            <person name="Chi A."/>
            <person name="Huttenhower C."/>
            <person name="Geer L.Y."/>
            <person name="Coon J.J."/>
            <person name="Syka J.E.P."/>
            <person name="Bai D.L."/>
            <person name="Shabanowitz J."/>
            <person name="Burke D.J."/>
            <person name="Troyanskaya O.G."/>
            <person name="Hunt D.F."/>
        </authorList>
    </citation>
    <scope>PHOSPHORYLATION [LARGE SCALE ANALYSIS] AT SER-131</scope>
    <scope>IDENTIFICATION BY MASS SPECTROMETRY [LARGE SCALE ANALYSIS]</scope>
</reference>
<reference key="8">
    <citation type="journal article" date="2008" name="Mol. Cell. Proteomics">
        <title>A multidimensional chromatography technology for in-depth phosphoproteome analysis.</title>
        <authorList>
            <person name="Albuquerque C.P."/>
            <person name="Smolka M.B."/>
            <person name="Payne S.H."/>
            <person name="Bafna V."/>
            <person name="Eng J."/>
            <person name="Zhou H."/>
        </authorList>
    </citation>
    <scope>PHOSPHORYLATION [LARGE SCALE ANALYSIS] AT SER-16</scope>
    <scope>IDENTIFICATION BY MASS SPECTROMETRY [LARGE SCALE ANALYSIS]</scope>
</reference>
<reference key="9">
    <citation type="journal article" date="2009" name="Science">
        <title>Global analysis of Cdk1 substrate phosphorylation sites provides insights into evolution.</title>
        <authorList>
            <person name="Holt L.J."/>
            <person name="Tuch B.B."/>
            <person name="Villen J."/>
            <person name="Johnson A.D."/>
            <person name="Gygi S.P."/>
            <person name="Morgan D.O."/>
        </authorList>
    </citation>
    <scope>PHOSPHORYLATION [LARGE SCALE ANALYSIS] AT SER-498</scope>
    <scope>IDENTIFICATION BY MASS SPECTROMETRY [LARGE SCALE ANALYSIS]</scope>
</reference>
<evidence type="ECO:0000255" key="1"/>
<evidence type="ECO:0000256" key="2">
    <source>
        <dbReference type="SAM" id="MobiDB-lite"/>
    </source>
</evidence>
<evidence type="ECO:0000269" key="3">
    <source>
    </source>
</evidence>
<evidence type="ECO:0000305" key="4"/>
<evidence type="ECO:0007744" key="5">
    <source>
    </source>
</evidence>
<evidence type="ECO:0007744" key="6">
    <source>
    </source>
</evidence>
<evidence type="ECO:0007744" key="7">
    <source>
    </source>
</evidence>
<evidence type="ECO:0007744" key="8">
    <source>
    </source>
</evidence>
<feature type="chain" id="PRO_0000203477" description="Protein ZRG17">
    <location>
        <begin position="1"/>
        <end position="605"/>
    </location>
</feature>
<feature type="topological domain" description="Cytoplasmic" evidence="1">
    <location>
        <begin position="1"/>
        <end position="225"/>
    </location>
</feature>
<feature type="transmembrane region" description="Helical" evidence="1">
    <location>
        <begin position="226"/>
        <end position="246"/>
    </location>
</feature>
<feature type="topological domain" description="Lumenal" evidence="1">
    <location>
        <begin position="247"/>
        <end position="254"/>
    </location>
</feature>
<feature type="transmembrane region" description="Helical" evidence="1">
    <location>
        <begin position="255"/>
        <end position="275"/>
    </location>
</feature>
<feature type="topological domain" description="Cytoplasmic" evidence="1">
    <location>
        <begin position="276"/>
        <end position="287"/>
    </location>
</feature>
<feature type="transmembrane region" description="Helical" evidence="1">
    <location>
        <begin position="288"/>
        <end position="308"/>
    </location>
</feature>
<feature type="topological domain" description="Lumenal" evidence="1">
    <location>
        <position position="309"/>
    </location>
</feature>
<feature type="transmembrane region" description="Helical" evidence="1">
    <location>
        <begin position="310"/>
        <end position="330"/>
    </location>
</feature>
<feature type="topological domain" description="Cytoplasmic" evidence="1">
    <location>
        <begin position="331"/>
        <end position="363"/>
    </location>
</feature>
<feature type="transmembrane region" description="Helical" evidence="1">
    <location>
        <begin position="364"/>
        <end position="384"/>
    </location>
</feature>
<feature type="topological domain" description="Lumenal" evidence="1">
    <location>
        <begin position="385"/>
        <end position="399"/>
    </location>
</feature>
<feature type="transmembrane region" description="Helical" evidence="1">
    <location>
        <begin position="400"/>
        <end position="420"/>
    </location>
</feature>
<feature type="topological domain" description="Cytoplasmic" evidence="1">
    <location>
        <begin position="421"/>
        <end position="422"/>
    </location>
</feature>
<feature type="transmembrane region" description="Helical" evidence="1">
    <location>
        <begin position="423"/>
        <end position="443"/>
    </location>
</feature>
<feature type="topological domain" description="Lumenal" evidence="1">
    <location>
        <begin position="444"/>
        <end position="545"/>
    </location>
</feature>
<feature type="transmembrane region" description="Helical" evidence="1">
    <location>
        <begin position="546"/>
        <end position="566"/>
    </location>
</feature>
<feature type="topological domain" description="Cytoplasmic" evidence="1">
    <location>
        <begin position="567"/>
        <end position="605"/>
    </location>
</feature>
<feature type="region of interest" description="Disordered" evidence="2">
    <location>
        <begin position="118"/>
        <end position="178"/>
    </location>
</feature>
<feature type="region of interest" description="Disordered" evidence="2">
    <location>
        <begin position="473"/>
        <end position="497"/>
    </location>
</feature>
<feature type="compositionally biased region" description="Polar residues" evidence="2">
    <location>
        <begin position="143"/>
        <end position="176"/>
    </location>
</feature>
<feature type="compositionally biased region" description="Polar residues" evidence="2">
    <location>
        <begin position="473"/>
        <end position="482"/>
    </location>
</feature>
<feature type="modified residue" description="Phosphoserine" evidence="7">
    <location>
        <position position="16"/>
    </location>
</feature>
<feature type="modified residue" description="Phosphoserine" evidence="5">
    <location>
        <position position="131"/>
    </location>
</feature>
<feature type="modified residue" description="Phosphoserine" evidence="6 8">
    <location>
        <position position="498"/>
    </location>
</feature>
<feature type="sequence conflict" description="In Ref. 3; AAT93124." evidence="4" ref="3">
    <original>A</original>
    <variation>V</variation>
    <location>
        <position position="239"/>
    </location>
</feature>
<sequence length="605" mass="67461">METPQMNAIQEEDNLSPEVAFQTPKLNDSDASSFSLSNMNAVGNVDGIPSQNRTFFASPRPSSLFYSAKEGNNSSSSIIYNPSFTFGENASSNANINEAALMKGKGNEGRRQSLKYIPAPKLVPPPPRTRSPVRGISPDAGSSKRSSMTLDSPFNFTTSTLQPHQQTPPSSAASRTSFRKGHRYKHSSVSMNFFQEPEVKIPLNIAKSLPIPDFNDLLSNLPWPKAYIQLSIAALQIFACLITFQVGHLYSWSNFITLSHFITYDIIGSLVIIFVENLSQFQVWFTGTITFPFGLNRIDVLLSFALAVSLCFVGLDLLFHIIEEFIVLFVESGSSLTNNHDHDEINEQIPHSHIANANDSQNENITLWYSILMINLVLSTLSLYKTFYANKYSNLKTKNPIITITYTAYLFIYPLLLDLLSSISDYLATLVISSLILWHGLTIARWTSTVLLMGFSTTSLSNSALFNNNDSTDTTAHTQQVESKAAKEKPSVRPRSMSSLPIATKNTKIRKTGFLNSAGFTENPTTIKNMIKDQIERLSEFKSRYILNYDDIVISKVNFTLYVVLIKITMKGGSDDDELMLRLAIDKCIQTSIPTCETTIDIDRI</sequence>
<organism>
    <name type="scientific">Saccharomyces cerevisiae (strain ATCC 204508 / S288c)</name>
    <name type="common">Baker's yeast</name>
    <dbReference type="NCBI Taxonomy" id="559292"/>
    <lineage>
        <taxon>Eukaryota</taxon>
        <taxon>Fungi</taxon>
        <taxon>Dikarya</taxon>
        <taxon>Ascomycota</taxon>
        <taxon>Saccharomycotina</taxon>
        <taxon>Saccharomycetes</taxon>
        <taxon>Saccharomycetales</taxon>
        <taxon>Saccharomycetaceae</taxon>
        <taxon>Saccharomyces</taxon>
    </lineage>
</organism>
<comment type="interaction">
    <interactant intactId="EBI-28507">
        <id>P53735</id>
    </interactant>
    <interactant intactId="EBI-34990">
        <id>Q03455</id>
        <label>MSC2</label>
    </interactant>
    <organismsDiffer>false</organismsDiffer>
    <experiments>4</experiments>
</comment>
<comment type="subcellular location">
    <subcellularLocation>
        <location evidence="3">Endoplasmic reticulum membrane</location>
        <topology evidence="3">Multi-pass membrane protein</topology>
    </subcellularLocation>
</comment>
<proteinExistence type="evidence at protein level"/>
<accession>P53735</accession>
<accession>D6W1L5</accession>
<accession>E9P919</accession>
<dbReference type="EMBL" id="Z71654">
    <property type="protein sequence ID" value="CAA96319.1"/>
    <property type="molecule type" value="Genomic_DNA"/>
</dbReference>
<dbReference type="EMBL" id="AY693105">
    <property type="protein sequence ID" value="AAT93124.1"/>
    <property type="molecule type" value="Genomic_DNA"/>
</dbReference>
<dbReference type="EMBL" id="BK006947">
    <property type="protein sequence ID" value="DAA10581.1"/>
    <property type="molecule type" value="Genomic_DNA"/>
</dbReference>
<dbReference type="PIR" id="S63370">
    <property type="entry name" value="S63370"/>
</dbReference>
<dbReference type="RefSeq" id="NP_014437.1">
    <property type="nucleotide sequence ID" value="NM_001183216.1"/>
</dbReference>
<dbReference type="BioGRID" id="35865">
    <property type="interactions" value="63"/>
</dbReference>
<dbReference type="DIP" id="DIP-5210N"/>
<dbReference type="FunCoup" id="P53735">
    <property type="interactions" value="43"/>
</dbReference>
<dbReference type="IntAct" id="P53735">
    <property type="interactions" value="15"/>
</dbReference>
<dbReference type="MINT" id="P53735"/>
<dbReference type="STRING" id="4932.YNR039C"/>
<dbReference type="TCDB" id="2.A.4.4.1">
    <property type="family name" value="the cation diffusion facilitator (cdf) family"/>
</dbReference>
<dbReference type="GlyGen" id="P53735">
    <property type="glycosylation" value="1 site, 1 O-linked glycan (1 site)"/>
</dbReference>
<dbReference type="iPTMnet" id="P53735"/>
<dbReference type="PaxDb" id="4932-YNR039C"/>
<dbReference type="PeptideAtlas" id="P53735"/>
<dbReference type="EnsemblFungi" id="YNR039C_mRNA">
    <property type="protein sequence ID" value="YNR039C"/>
    <property type="gene ID" value="YNR039C"/>
</dbReference>
<dbReference type="GeneID" id="855775"/>
<dbReference type="KEGG" id="sce:YNR039C"/>
<dbReference type="AGR" id="SGD:S000005322"/>
<dbReference type="SGD" id="S000005322">
    <property type="gene designation" value="ZRG17"/>
</dbReference>
<dbReference type="VEuPathDB" id="FungiDB:YNR039C"/>
<dbReference type="eggNOG" id="ENOG502QV77">
    <property type="taxonomic scope" value="Eukaryota"/>
</dbReference>
<dbReference type="HOGENOM" id="CLU_423382_0_0_1"/>
<dbReference type="InParanoid" id="P53735"/>
<dbReference type="OMA" id="FEVWSTG"/>
<dbReference type="OrthoDB" id="5382797at2759"/>
<dbReference type="BioCyc" id="YEAST:G3O-33349-MONOMER"/>
<dbReference type="BioGRID-ORCS" id="855775">
    <property type="hits" value="2 hits in 10 CRISPR screens"/>
</dbReference>
<dbReference type="PRO" id="PR:P53735"/>
<dbReference type="Proteomes" id="UP000002311">
    <property type="component" value="Chromosome XIV"/>
</dbReference>
<dbReference type="RNAct" id="P53735">
    <property type="molecule type" value="protein"/>
</dbReference>
<dbReference type="GO" id="GO:0005783">
    <property type="term" value="C:endoplasmic reticulum"/>
    <property type="evidence" value="ECO:0000314"/>
    <property type="project" value="SGD"/>
</dbReference>
<dbReference type="GO" id="GO:0005789">
    <property type="term" value="C:endoplasmic reticulum membrane"/>
    <property type="evidence" value="ECO:0007669"/>
    <property type="project" value="UniProtKB-SubCell"/>
</dbReference>
<dbReference type="GO" id="GO:0005385">
    <property type="term" value="F:zinc ion transmembrane transporter activity"/>
    <property type="evidence" value="ECO:0000315"/>
    <property type="project" value="SGD"/>
</dbReference>
<dbReference type="GO" id="GO:0006829">
    <property type="term" value="P:zinc ion transport"/>
    <property type="evidence" value="ECO:0000315"/>
    <property type="project" value="SGD"/>
</dbReference>
<keyword id="KW-0256">Endoplasmic reticulum</keyword>
<keyword id="KW-0472">Membrane</keyword>
<keyword id="KW-0597">Phosphoprotein</keyword>
<keyword id="KW-1185">Reference proteome</keyword>
<keyword id="KW-0812">Transmembrane</keyword>
<keyword id="KW-1133">Transmembrane helix</keyword>
<name>ZRG17_YEAST</name>
<gene>
    <name type="primary">ZRG17</name>
    <name type="ordered locus">YNR039C</name>
    <name type="ORF">N3403</name>
</gene>